<sequence>MTDFSLYLVTDPVLGGGPEKVAGIVDSAISGGVSVVQLRDKNSGVEDVRAAAKELKELCDARGVALVVNDYLDIAVELGLHLHIGQGDTPYTQARELLPAHLELGLSIENLDQLHAVIAQCAETGVALPDVIGIGPVASTATKPDAAPALGVEGIAEIAAVAQDHGIASVAIGGVGLRNAAELAATPIDGLCVVSEIMTAANPAAAATRLRTAFQPTFSPETQTELSQTELQGAFVNSPSAPRVLSIAGTDPTGGAGIQADLKSIAAGGGYGMCVVTSLVAQNTHGVNTIHTPPLTFLEEQLEAVFSDVTVDAIKLGMLGSADTVDLVASWLGSHEHGPVVLDPVMIATSGDRLLDASAEESLRRLAVHVDVVTPNIPELAVLCDSAPAITMDEAIAQAQGFARTHDTIVIVKGGHLTGALADNAVVRPDGSVFQVENLRVNTTNSHGTGCSLSASLATKIAAGESVEKALEWSTRWLNEALRHADHLAVGTGNGPVDHGHLARRMTHAAETTPWAHLRAPRLDGATAASFTTPSTVKSPAPRIEPAGPFTRALWEASGDIIAGINSSDFITMLGDGTLRRPEFDFYIDQDAQYLAQYSRALARLSSIAPDSHAQIEWAQSAAECLVVEAELHRSYMAGKEVSAPSHITMAYTDFLIARTYTEDYVCGVAAVLPCYWLYAEIGLMLAEQNHDEHPYKDWLNTYSGEEFIAGTRAAIARLEKALENAGAEQRVDAARAFLSASVHEREFFDQATRHGWTMVGSS</sequence>
<organism>
    <name type="scientific">Corynebacterium glutamicum (strain ATCC 13032 / DSM 20300 / JCM 1318 / BCRC 11384 / CCUG 27702 / LMG 3730 / NBRC 12168 / NCIMB 10025 / NRRL B-2784 / 534)</name>
    <dbReference type="NCBI Taxonomy" id="196627"/>
    <lineage>
        <taxon>Bacteria</taxon>
        <taxon>Bacillati</taxon>
        <taxon>Actinomycetota</taxon>
        <taxon>Actinomycetes</taxon>
        <taxon>Mycobacteriales</taxon>
        <taxon>Corynebacteriaceae</taxon>
        <taxon>Corynebacterium</taxon>
    </lineage>
</organism>
<keyword id="KW-0067">ATP-binding</keyword>
<keyword id="KW-0418">Kinase</keyword>
<keyword id="KW-0460">Magnesium</keyword>
<keyword id="KW-0479">Metal-binding</keyword>
<keyword id="KW-0511">Multifunctional enzyme</keyword>
<keyword id="KW-0547">Nucleotide-binding</keyword>
<keyword id="KW-1185">Reference proteome</keyword>
<keyword id="KW-0784">Thiamine biosynthesis</keyword>
<keyword id="KW-0808">Transferase</keyword>
<feature type="chain" id="PRO_0000192039" description="Thiamine biosynthesis multifunctional protein ThiED">
    <location>
        <begin position="1"/>
        <end position="763"/>
    </location>
</feature>
<feature type="region of interest" description="Thiamine-phosphate synthase">
    <location>
        <begin position="1"/>
        <end position="210"/>
    </location>
</feature>
<feature type="region of interest" description="Hydroxymethylpyrimidine/phosphomethylpyrimidine kinase">
    <location>
        <begin position="245"/>
        <end position="500"/>
    </location>
</feature>
<feature type="region of interest" description="Thiaminase-2">
    <location>
        <begin position="550"/>
        <end position="763"/>
    </location>
</feature>
<feature type="binding site" evidence="1">
    <location>
        <begin position="37"/>
        <end position="41"/>
    </location>
    <ligand>
        <name>4-amino-2-methyl-5-(diphosphooxymethyl)pyrimidine</name>
        <dbReference type="ChEBI" id="CHEBI:57841"/>
    </ligand>
</feature>
<feature type="binding site" evidence="1">
    <location>
        <position position="69"/>
    </location>
    <ligand>
        <name>4-amino-2-methyl-5-(diphosphooxymethyl)pyrimidine</name>
        <dbReference type="ChEBI" id="CHEBI:57841"/>
    </ligand>
</feature>
<feature type="binding site" evidence="1">
    <location>
        <position position="70"/>
    </location>
    <ligand>
        <name>Mg(2+)</name>
        <dbReference type="ChEBI" id="CHEBI:18420"/>
    </ligand>
</feature>
<feature type="binding site" evidence="1">
    <location>
        <position position="88"/>
    </location>
    <ligand>
        <name>Mg(2+)</name>
        <dbReference type="ChEBI" id="CHEBI:18420"/>
    </ligand>
</feature>
<feature type="binding site" evidence="1">
    <location>
        <position position="107"/>
    </location>
    <ligand>
        <name>4-amino-2-methyl-5-(diphosphooxymethyl)pyrimidine</name>
        <dbReference type="ChEBI" id="CHEBI:57841"/>
    </ligand>
</feature>
<feature type="binding site" evidence="1">
    <location>
        <begin position="140"/>
        <end position="142"/>
    </location>
    <ligand>
        <name>2-[(2R,5Z)-2-carboxy-4-methylthiazol-5(2H)-ylidene]ethyl phosphate</name>
        <dbReference type="ChEBI" id="CHEBI:62899"/>
    </ligand>
</feature>
<feature type="binding site" evidence="1">
    <location>
        <position position="143"/>
    </location>
    <ligand>
        <name>4-amino-2-methyl-5-(diphosphooxymethyl)pyrimidine</name>
        <dbReference type="ChEBI" id="CHEBI:57841"/>
    </ligand>
</feature>
<feature type="binding site" evidence="1">
    <location>
        <position position="174"/>
    </location>
    <ligand>
        <name>2-[(2R,5Z)-2-carboxy-4-methylthiazol-5(2H)-ylidene]ethyl phosphate</name>
        <dbReference type="ChEBI" id="CHEBI:62899"/>
    </ligand>
</feature>
<feature type="binding site" evidence="1">
    <location>
        <begin position="194"/>
        <end position="195"/>
    </location>
    <ligand>
        <name>2-[(2R,5Z)-2-carboxy-4-methylthiazol-5(2H)-ylidene]ethyl phosphate</name>
        <dbReference type="ChEBI" id="CHEBI:62899"/>
    </ligand>
</feature>
<feature type="binding site" evidence="1">
    <location>
        <position position="282"/>
    </location>
    <ligand>
        <name>4-amino-5-hydroxymethyl-2-methylpyrimidine</name>
        <dbReference type="ChEBI" id="CHEBI:16892"/>
    </ligand>
</feature>
<accession>Q8NQH1</accession>
<reference key="1">
    <citation type="journal article" date="2003" name="Appl. Microbiol. Biotechnol.">
        <title>The Corynebacterium glutamicum genome: features and impacts on biotechnological processes.</title>
        <authorList>
            <person name="Ikeda M."/>
            <person name="Nakagawa S."/>
        </authorList>
    </citation>
    <scope>NUCLEOTIDE SEQUENCE [LARGE SCALE GENOMIC DNA]</scope>
    <source>
        <strain>ATCC 13032 / DSM 20300 / JCM 1318 / BCRC 11384 / CCUG 27702 / LMG 3730 / NBRC 12168 / NCIMB 10025 / NRRL B-2784 / 534</strain>
    </source>
</reference>
<reference key="2">
    <citation type="journal article" date="2003" name="J. Biotechnol.">
        <title>The complete Corynebacterium glutamicum ATCC 13032 genome sequence and its impact on the production of L-aspartate-derived amino acids and vitamins.</title>
        <authorList>
            <person name="Kalinowski J."/>
            <person name="Bathe B."/>
            <person name="Bartels D."/>
            <person name="Bischoff N."/>
            <person name="Bott M."/>
            <person name="Burkovski A."/>
            <person name="Dusch N."/>
            <person name="Eggeling L."/>
            <person name="Eikmanns B.J."/>
            <person name="Gaigalat L."/>
            <person name="Goesmann A."/>
            <person name="Hartmann M."/>
            <person name="Huthmacher K."/>
            <person name="Kraemer R."/>
            <person name="Linke B."/>
            <person name="McHardy A.C."/>
            <person name="Meyer F."/>
            <person name="Moeckel B."/>
            <person name="Pfefferle W."/>
            <person name="Puehler A."/>
            <person name="Rey D.A."/>
            <person name="Rueckert C."/>
            <person name="Rupp O."/>
            <person name="Sahm H."/>
            <person name="Wendisch V.F."/>
            <person name="Wiegraebe I."/>
            <person name="Tauch A."/>
        </authorList>
    </citation>
    <scope>NUCLEOTIDE SEQUENCE [LARGE SCALE GENOMIC DNA]</scope>
    <source>
        <strain>ATCC 13032 / DSM 20300 / JCM 1318 / BCRC 11384 / CCUG 27702 / LMG 3730 / NBRC 12168 / NCIMB 10025 / NRRL B-2784 / 534</strain>
    </source>
</reference>
<proteinExistence type="inferred from homology"/>
<gene>
    <name type="primary">theD</name>
    <name type="synonym">thiD1</name>
    <name type="ordered locus">Cgl1463</name>
    <name type="ordered locus">cg1654</name>
</gene>
<protein>
    <recommendedName>
        <fullName>Thiamine biosynthesis multifunctional protein ThiED</fullName>
    </recommendedName>
    <domain>
        <recommendedName>
            <fullName>Thiamine-phosphate synthase</fullName>
            <shortName>TMP-PPase</shortName>
            <shortName>TP synthase</shortName>
            <shortName>TPS</shortName>
            <ecNumber evidence="2">2.5.1.3</ecNumber>
        </recommendedName>
        <alternativeName>
            <fullName>Thiamine-phosphate pyrophosphorylase</fullName>
            <shortName>TMP pyrophosphorylase</shortName>
        </alternativeName>
    </domain>
    <domain>
        <recommendedName>
            <fullName>Hydroxymethylpyrimidine/phosphomethylpyrimidine kinase</fullName>
            <ecNumber evidence="3">2.7.1.49</ecNumber>
            <ecNumber evidence="3">2.7.4.7</ecNumber>
        </recommendedName>
        <alternativeName>
            <fullName>Hydroxymethylpyrimidine kinase</fullName>
            <shortName>HMP kinase</shortName>
        </alternativeName>
        <alternativeName>
            <fullName>Hydroxymethylpyrimidine phosphate kinase</fullName>
            <shortName>HMP-P kinase</shortName>
            <shortName>HMP-phosphate kinase</shortName>
            <shortName>HMPP kinase</shortName>
        </alternativeName>
    </domain>
</protein>
<evidence type="ECO:0000250" key="1"/>
<evidence type="ECO:0000250" key="2">
    <source>
        <dbReference type="UniProtKB" id="P39594"/>
    </source>
</evidence>
<evidence type="ECO:0000250" key="3">
    <source>
        <dbReference type="UniProtKB" id="P76422"/>
    </source>
</evidence>
<evidence type="ECO:0000305" key="4"/>
<name>THIED_CORGL</name>
<dbReference type="EC" id="2.5.1.3" evidence="2"/>
<dbReference type="EC" id="2.7.1.49" evidence="3"/>
<dbReference type="EC" id="2.7.4.7" evidence="3"/>
<dbReference type="EMBL" id="BA000036">
    <property type="protein sequence ID" value="BAB98856.1"/>
    <property type="status" value="ALT_INIT"/>
    <property type="molecule type" value="Genomic_DNA"/>
</dbReference>
<dbReference type="EMBL" id="BX927152">
    <property type="protein sequence ID" value="CAF21472.1"/>
    <property type="molecule type" value="Genomic_DNA"/>
</dbReference>
<dbReference type="RefSeq" id="NP_600680.3">
    <property type="nucleotide sequence ID" value="NC_003450.3"/>
</dbReference>
<dbReference type="RefSeq" id="WP_011014382.1">
    <property type="nucleotide sequence ID" value="NC_006958.1"/>
</dbReference>
<dbReference type="SMR" id="Q8NQH1"/>
<dbReference type="STRING" id="196627.cg1654"/>
<dbReference type="DNASU" id="3345397"/>
<dbReference type="KEGG" id="cgb:cg1654"/>
<dbReference type="KEGG" id="cgl:Cgl1463"/>
<dbReference type="PATRIC" id="fig|196627.13.peg.1430"/>
<dbReference type="eggNOG" id="COG0351">
    <property type="taxonomic scope" value="Bacteria"/>
</dbReference>
<dbReference type="eggNOG" id="COG0352">
    <property type="taxonomic scope" value="Bacteria"/>
</dbReference>
<dbReference type="eggNOG" id="COG0819">
    <property type="taxonomic scope" value="Bacteria"/>
</dbReference>
<dbReference type="HOGENOM" id="CLU_020520_2_0_11"/>
<dbReference type="OrthoDB" id="34166at2"/>
<dbReference type="BioCyc" id="CORYNE:G18NG-11046-MONOMER"/>
<dbReference type="UniPathway" id="UPA00060">
    <property type="reaction ID" value="UER00138"/>
</dbReference>
<dbReference type="UniPathway" id="UPA00060">
    <property type="reaction ID" value="UER00141"/>
</dbReference>
<dbReference type="Proteomes" id="UP000000582">
    <property type="component" value="Chromosome"/>
</dbReference>
<dbReference type="Proteomes" id="UP000001009">
    <property type="component" value="Chromosome"/>
</dbReference>
<dbReference type="GO" id="GO:0005829">
    <property type="term" value="C:cytosol"/>
    <property type="evidence" value="ECO:0007669"/>
    <property type="project" value="TreeGrafter"/>
</dbReference>
<dbReference type="GO" id="GO:0005524">
    <property type="term" value="F:ATP binding"/>
    <property type="evidence" value="ECO:0007669"/>
    <property type="project" value="UniProtKB-KW"/>
</dbReference>
<dbReference type="GO" id="GO:0008902">
    <property type="term" value="F:hydroxymethylpyrimidine kinase activity"/>
    <property type="evidence" value="ECO:0007669"/>
    <property type="project" value="UniProtKB-EC"/>
</dbReference>
<dbReference type="GO" id="GO:0000287">
    <property type="term" value="F:magnesium ion binding"/>
    <property type="evidence" value="ECO:0007669"/>
    <property type="project" value="UniProtKB-UniRule"/>
</dbReference>
<dbReference type="GO" id="GO:0008972">
    <property type="term" value="F:phosphomethylpyrimidine kinase activity"/>
    <property type="evidence" value="ECO:0007669"/>
    <property type="project" value="UniProtKB-EC"/>
</dbReference>
<dbReference type="GO" id="GO:0004789">
    <property type="term" value="F:thiamine-phosphate diphosphorylase activity"/>
    <property type="evidence" value="ECO:0007669"/>
    <property type="project" value="UniProtKB-UniRule"/>
</dbReference>
<dbReference type="GO" id="GO:0009228">
    <property type="term" value="P:thiamine biosynthetic process"/>
    <property type="evidence" value="ECO:0007669"/>
    <property type="project" value="UniProtKB-KW"/>
</dbReference>
<dbReference type="GO" id="GO:0009229">
    <property type="term" value="P:thiamine diphosphate biosynthetic process"/>
    <property type="evidence" value="ECO:0007669"/>
    <property type="project" value="UniProtKB-UniRule"/>
</dbReference>
<dbReference type="CDD" id="cd01169">
    <property type="entry name" value="HMPP_kinase"/>
    <property type="match status" value="1"/>
</dbReference>
<dbReference type="CDD" id="cd19365">
    <property type="entry name" value="TenA_C-like"/>
    <property type="match status" value="1"/>
</dbReference>
<dbReference type="CDD" id="cd00564">
    <property type="entry name" value="TMP_TenI"/>
    <property type="match status" value="1"/>
</dbReference>
<dbReference type="FunFam" id="3.40.1190.20:FF:000003">
    <property type="entry name" value="Phosphomethylpyrimidine kinase ThiD"/>
    <property type="match status" value="1"/>
</dbReference>
<dbReference type="Gene3D" id="3.40.1190.20">
    <property type="match status" value="1"/>
</dbReference>
<dbReference type="Gene3D" id="3.20.20.70">
    <property type="entry name" value="Aldolase class I"/>
    <property type="match status" value="1"/>
</dbReference>
<dbReference type="Gene3D" id="1.20.910.10">
    <property type="entry name" value="Heme oxygenase-like"/>
    <property type="match status" value="1"/>
</dbReference>
<dbReference type="HAMAP" id="MF_00097">
    <property type="entry name" value="TMP_synthase"/>
    <property type="match status" value="1"/>
</dbReference>
<dbReference type="InterPro" id="IPR013785">
    <property type="entry name" value="Aldolase_TIM"/>
</dbReference>
<dbReference type="InterPro" id="IPR016084">
    <property type="entry name" value="Haem_Oase-like_multi-hlx"/>
</dbReference>
<dbReference type="InterPro" id="IPR004399">
    <property type="entry name" value="HMP/HMP-P_kinase_dom"/>
</dbReference>
<dbReference type="InterPro" id="IPR013749">
    <property type="entry name" value="PM/HMP-P_kinase-1"/>
</dbReference>
<dbReference type="InterPro" id="IPR029056">
    <property type="entry name" value="Ribokinase-like"/>
</dbReference>
<dbReference type="InterPro" id="IPR004305">
    <property type="entry name" value="Thiaminase-2/PQQC"/>
</dbReference>
<dbReference type="InterPro" id="IPR036206">
    <property type="entry name" value="ThiamineP_synth_sf"/>
</dbReference>
<dbReference type="InterPro" id="IPR022998">
    <property type="entry name" value="ThiamineP_synth_TenI"/>
</dbReference>
<dbReference type="InterPro" id="IPR034291">
    <property type="entry name" value="TMP_synthase"/>
</dbReference>
<dbReference type="NCBIfam" id="TIGR00097">
    <property type="entry name" value="HMP-P_kinase"/>
    <property type="match status" value="1"/>
</dbReference>
<dbReference type="NCBIfam" id="NF007070">
    <property type="entry name" value="PRK09517.1"/>
    <property type="match status" value="1"/>
</dbReference>
<dbReference type="NCBIfam" id="NF011301">
    <property type="entry name" value="PRK14713.1"/>
    <property type="match status" value="1"/>
</dbReference>
<dbReference type="NCBIfam" id="TIGR00693">
    <property type="entry name" value="thiE"/>
    <property type="match status" value="1"/>
</dbReference>
<dbReference type="PANTHER" id="PTHR20858:SF17">
    <property type="entry name" value="HYDROXYMETHYLPYRIMIDINE_PHOSPHOMETHYLPYRIMIDINE KINASE THI20-RELATED"/>
    <property type="match status" value="1"/>
</dbReference>
<dbReference type="PANTHER" id="PTHR20858">
    <property type="entry name" value="PHOSPHOMETHYLPYRIMIDINE KINASE"/>
    <property type="match status" value="1"/>
</dbReference>
<dbReference type="Pfam" id="PF08543">
    <property type="entry name" value="Phos_pyr_kin"/>
    <property type="match status" value="1"/>
</dbReference>
<dbReference type="Pfam" id="PF03070">
    <property type="entry name" value="TENA_THI-4"/>
    <property type="match status" value="1"/>
</dbReference>
<dbReference type="Pfam" id="PF02581">
    <property type="entry name" value="TMP-TENI"/>
    <property type="match status" value="1"/>
</dbReference>
<dbReference type="SUPFAM" id="SSF48613">
    <property type="entry name" value="Heme oxygenase-like"/>
    <property type="match status" value="1"/>
</dbReference>
<dbReference type="SUPFAM" id="SSF53613">
    <property type="entry name" value="Ribokinase-like"/>
    <property type="match status" value="1"/>
</dbReference>
<dbReference type="SUPFAM" id="SSF51391">
    <property type="entry name" value="Thiamin phosphate synthase"/>
    <property type="match status" value="1"/>
</dbReference>
<comment type="function">
    <text evidence="2">Condenses 4-methyl-5-(beta-hydroxyethyl)thiazole monophosphate (THZ-P) and 2-methyl-4-amino-5-hydroxymethyl pyrimidine pyrophosphate (HMP-PP) to form thiamine monophosphate (TMP).</text>
</comment>
<comment type="function">
    <text evidence="3">Catalyzes the phosphorylation of hydroxymethylpyrimidine phosphate (HMP-P) to HMP-PP, and of HMP to HMP-P.</text>
</comment>
<comment type="catalytic activity">
    <reaction evidence="2">
        <text>2-[(2R,5Z)-2-carboxy-4-methylthiazol-5(2H)-ylidene]ethyl phosphate + 4-amino-2-methyl-5-(diphosphooxymethyl)pyrimidine + 2 H(+) = thiamine phosphate + CO2 + diphosphate</text>
        <dbReference type="Rhea" id="RHEA:47844"/>
        <dbReference type="ChEBI" id="CHEBI:15378"/>
        <dbReference type="ChEBI" id="CHEBI:16526"/>
        <dbReference type="ChEBI" id="CHEBI:33019"/>
        <dbReference type="ChEBI" id="CHEBI:37575"/>
        <dbReference type="ChEBI" id="CHEBI:57841"/>
        <dbReference type="ChEBI" id="CHEBI:62899"/>
        <dbReference type="EC" id="2.5.1.3"/>
    </reaction>
</comment>
<comment type="catalytic activity">
    <reaction evidence="2">
        <text>2-(2-carboxy-4-methylthiazol-5-yl)ethyl phosphate + 4-amino-2-methyl-5-(diphosphooxymethyl)pyrimidine + 2 H(+) = thiamine phosphate + CO2 + diphosphate</text>
        <dbReference type="Rhea" id="RHEA:47848"/>
        <dbReference type="ChEBI" id="CHEBI:15378"/>
        <dbReference type="ChEBI" id="CHEBI:16526"/>
        <dbReference type="ChEBI" id="CHEBI:33019"/>
        <dbReference type="ChEBI" id="CHEBI:37575"/>
        <dbReference type="ChEBI" id="CHEBI:57841"/>
        <dbReference type="ChEBI" id="CHEBI:62890"/>
        <dbReference type="EC" id="2.5.1.3"/>
    </reaction>
</comment>
<comment type="catalytic activity">
    <reaction evidence="2">
        <text>4-methyl-5-(2-phosphooxyethyl)-thiazole + 4-amino-2-methyl-5-(diphosphooxymethyl)pyrimidine + H(+) = thiamine phosphate + diphosphate</text>
        <dbReference type="Rhea" id="RHEA:22328"/>
        <dbReference type="ChEBI" id="CHEBI:15378"/>
        <dbReference type="ChEBI" id="CHEBI:33019"/>
        <dbReference type="ChEBI" id="CHEBI:37575"/>
        <dbReference type="ChEBI" id="CHEBI:57841"/>
        <dbReference type="ChEBI" id="CHEBI:58296"/>
        <dbReference type="EC" id="2.5.1.3"/>
    </reaction>
</comment>
<comment type="catalytic activity">
    <reaction evidence="3">
        <text>4-amino-5-hydroxymethyl-2-methylpyrimidine + ATP = 4-amino-2-methyl-5-(phosphooxymethyl)pyrimidine + ADP + H(+)</text>
        <dbReference type="Rhea" id="RHEA:23096"/>
        <dbReference type="ChEBI" id="CHEBI:15378"/>
        <dbReference type="ChEBI" id="CHEBI:16892"/>
        <dbReference type="ChEBI" id="CHEBI:30616"/>
        <dbReference type="ChEBI" id="CHEBI:58354"/>
        <dbReference type="ChEBI" id="CHEBI:456216"/>
        <dbReference type="EC" id="2.7.1.49"/>
    </reaction>
</comment>
<comment type="catalytic activity">
    <reaction evidence="3">
        <text>4-amino-2-methyl-5-(phosphooxymethyl)pyrimidine + ATP = 4-amino-2-methyl-5-(diphosphooxymethyl)pyrimidine + ADP</text>
        <dbReference type="Rhea" id="RHEA:19893"/>
        <dbReference type="ChEBI" id="CHEBI:30616"/>
        <dbReference type="ChEBI" id="CHEBI:57841"/>
        <dbReference type="ChEBI" id="CHEBI:58354"/>
        <dbReference type="ChEBI" id="CHEBI:456216"/>
        <dbReference type="EC" id="2.7.4.7"/>
    </reaction>
</comment>
<comment type="cofactor">
    <cofactor evidence="1">
        <name>Mg(2+)</name>
        <dbReference type="ChEBI" id="CHEBI:18420"/>
    </cofactor>
    <text evidence="1">Binds 1 Mg(2+) ion per subunit.</text>
</comment>
<comment type="pathway">
    <text>Cofactor biosynthesis; thiamine diphosphate biosynthesis; 4-amino-2-methyl-5-diphosphomethylpyrimidine from 5-amino-1-(5-phospho-D-ribosyl)imidazole: step 3/3.</text>
</comment>
<comment type="pathway">
    <text>Cofactor biosynthesis; thiamine diphosphate biosynthesis; thiamine phosphate from 4-amino-2-methyl-5-diphosphomethylpyrimidine and 4-methyl-5-(2-phosphoethyl)-thiazole: step 1/1.</text>
</comment>
<comment type="similarity">
    <text evidence="4">In the N-terminal section; belongs to the thiamine-phosphate synthase family.</text>
</comment>
<comment type="similarity">
    <text evidence="4">In the central section; belongs to the ThiD family.</text>
</comment>
<comment type="similarity">
    <text evidence="4">In the C-terminal section; belongs to the thiaminase-2 family.</text>
</comment>
<comment type="sequence caution" evidence="4">
    <conflict type="erroneous initiation">
        <sequence resource="EMBL-CDS" id="BAB98856"/>
    </conflict>
    <text>Truncated N-terminus.</text>
</comment>